<feature type="chain" id="PRO_0000375905" description="Uncharacterized protein YdjI">
    <location>
        <begin position="1"/>
        <end position="323"/>
    </location>
</feature>
<organism>
    <name type="scientific">Bacillus subtilis (strain 168)</name>
    <dbReference type="NCBI Taxonomy" id="224308"/>
    <lineage>
        <taxon>Bacteria</taxon>
        <taxon>Bacillati</taxon>
        <taxon>Bacillota</taxon>
        <taxon>Bacilli</taxon>
        <taxon>Bacillales</taxon>
        <taxon>Bacillaceae</taxon>
        <taxon>Bacillus</taxon>
    </lineage>
</organism>
<keyword id="KW-1185">Reference proteome</keyword>
<proteinExistence type="predicted"/>
<name>YDJI_BACSU</name>
<reference key="1">
    <citation type="journal article" date="1997" name="DNA Res.">
        <title>Sequence analysis of the groESL-cotA region of the Bacillus subtilis genome, containing the restriction/modification system genes.</title>
        <authorList>
            <person name="Kasahara Y."/>
            <person name="Nakai S."/>
            <person name="Ogasawara N."/>
            <person name="Yata K."/>
            <person name="Sadaie Y."/>
        </authorList>
    </citation>
    <scope>NUCLEOTIDE SEQUENCE [GENOMIC DNA]</scope>
    <source>
        <strain>168 / Marburg / ATCC 6051 / DSM 10 / JCM 1465 / NBRC 13719 / NCIMB 3610 / NRRL NRS-744 / VKM B-501</strain>
    </source>
</reference>
<reference key="2">
    <citation type="journal article" date="1997" name="Nature">
        <title>The complete genome sequence of the Gram-positive bacterium Bacillus subtilis.</title>
        <authorList>
            <person name="Kunst F."/>
            <person name="Ogasawara N."/>
            <person name="Moszer I."/>
            <person name="Albertini A.M."/>
            <person name="Alloni G."/>
            <person name="Azevedo V."/>
            <person name="Bertero M.G."/>
            <person name="Bessieres P."/>
            <person name="Bolotin A."/>
            <person name="Borchert S."/>
            <person name="Borriss R."/>
            <person name="Boursier L."/>
            <person name="Brans A."/>
            <person name="Braun M."/>
            <person name="Brignell S.C."/>
            <person name="Bron S."/>
            <person name="Brouillet S."/>
            <person name="Bruschi C.V."/>
            <person name="Caldwell B."/>
            <person name="Capuano V."/>
            <person name="Carter N.M."/>
            <person name="Choi S.-K."/>
            <person name="Codani J.-J."/>
            <person name="Connerton I.F."/>
            <person name="Cummings N.J."/>
            <person name="Daniel R.A."/>
            <person name="Denizot F."/>
            <person name="Devine K.M."/>
            <person name="Duesterhoeft A."/>
            <person name="Ehrlich S.D."/>
            <person name="Emmerson P.T."/>
            <person name="Entian K.-D."/>
            <person name="Errington J."/>
            <person name="Fabret C."/>
            <person name="Ferrari E."/>
            <person name="Foulger D."/>
            <person name="Fritz C."/>
            <person name="Fujita M."/>
            <person name="Fujita Y."/>
            <person name="Fuma S."/>
            <person name="Galizzi A."/>
            <person name="Galleron N."/>
            <person name="Ghim S.-Y."/>
            <person name="Glaser P."/>
            <person name="Goffeau A."/>
            <person name="Golightly E.J."/>
            <person name="Grandi G."/>
            <person name="Guiseppi G."/>
            <person name="Guy B.J."/>
            <person name="Haga K."/>
            <person name="Haiech J."/>
            <person name="Harwood C.R."/>
            <person name="Henaut A."/>
            <person name="Hilbert H."/>
            <person name="Holsappel S."/>
            <person name="Hosono S."/>
            <person name="Hullo M.-F."/>
            <person name="Itaya M."/>
            <person name="Jones L.-M."/>
            <person name="Joris B."/>
            <person name="Karamata D."/>
            <person name="Kasahara Y."/>
            <person name="Klaerr-Blanchard M."/>
            <person name="Klein C."/>
            <person name="Kobayashi Y."/>
            <person name="Koetter P."/>
            <person name="Koningstein G."/>
            <person name="Krogh S."/>
            <person name="Kumano M."/>
            <person name="Kurita K."/>
            <person name="Lapidus A."/>
            <person name="Lardinois S."/>
            <person name="Lauber J."/>
            <person name="Lazarevic V."/>
            <person name="Lee S.-M."/>
            <person name="Levine A."/>
            <person name="Liu H."/>
            <person name="Masuda S."/>
            <person name="Mauel C."/>
            <person name="Medigue C."/>
            <person name="Medina N."/>
            <person name="Mellado R.P."/>
            <person name="Mizuno M."/>
            <person name="Moestl D."/>
            <person name="Nakai S."/>
            <person name="Noback M."/>
            <person name="Noone D."/>
            <person name="O'Reilly M."/>
            <person name="Ogawa K."/>
            <person name="Ogiwara A."/>
            <person name="Oudega B."/>
            <person name="Park S.-H."/>
            <person name="Parro V."/>
            <person name="Pohl T.M."/>
            <person name="Portetelle D."/>
            <person name="Porwollik S."/>
            <person name="Prescott A.M."/>
            <person name="Presecan E."/>
            <person name="Pujic P."/>
            <person name="Purnelle B."/>
            <person name="Rapoport G."/>
            <person name="Rey M."/>
            <person name="Reynolds S."/>
            <person name="Rieger M."/>
            <person name="Rivolta C."/>
            <person name="Rocha E."/>
            <person name="Roche B."/>
            <person name="Rose M."/>
            <person name="Sadaie Y."/>
            <person name="Sato T."/>
            <person name="Scanlan E."/>
            <person name="Schleich S."/>
            <person name="Schroeter R."/>
            <person name="Scoffone F."/>
            <person name="Sekiguchi J."/>
            <person name="Sekowska A."/>
            <person name="Seror S.J."/>
            <person name="Serror P."/>
            <person name="Shin B.-S."/>
            <person name="Soldo B."/>
            <person name="Sorokin A."/>
            <person name="Tacconi E."/>
            <person name="Takagi T."/>
            <person name="Takahashi H."/>
            <person name="Takemaru K."/>
            <person name="Takeuchi M."/>
            <person name="Tamakoshi A."/>
            <person name="Tanaka T."/>
            <person name="Terpstra P."/>
            <person name="Tognoni A."/>
            <person name="Tosato V."/>
            <person name="Uchiyama S."/>
            <person name="Vandenbol M."/>
            <person name="Vannier F."/>
            <person name="Vassarotti A."/>
            <person name="Viari A."/>
            <person name="Wambutt R."/>
            <person name="Wedler E."/>
            <person name="Wedler H."/>
            <person name="Weitzenegger T."/>
            <person name="Winters P."/>
            <person name="Wipat A."/>
            <person name="Yamamoto H."/>
            <person name="Yamane K."/>
            <person name="Yasumoto K."/>
            <person name="Yata K."/>
            <person name="Yoshida K."/>
            <person name="Yoshikawa H.-F."/>
            <person name="Zumstein E."/>
            <person name="Yoshikawa H."/>
            <person name="Danchin A."/>
        </authorList>
    </citation>
    <scope>NUCLEOTIDE SEQUENCE [LARGE SCALE GENOMIC DNA]</scope>
    <source>
        <strain>168</strain>
    </source>
</reference>
<protein>
    <recommendedName>
        <fullName>Uncharacterized protein YdjI</fullName>
    </recommendedName>
</protein>
<sequence length="323" mass="36081">MSFFRNQLANVVEWEEFRDDMIFYKWNNREIKKGSRLIIRPGQDAVFLNNGRVEGVFQDDGDYDIESEIIPFLSTLKGFKFGFNSGMRAEVLFVNTKEFTVRWGTKQAINIPAAGMPGGMPIRANGTFNFKVQDYISLIDKIAGVKDQYFVEDIKTRIISILDQLLMKWITREGKDMFNLQANAFDIAKGIQEDLDMQLISDGMTVTGFQIMSFNYPQEVQDMITKNASYGMVGDVNRYQQISMTDGMASGKMSGSGAASDMAGMMMGMNMANQMMNQMNQNQQAQSSGPQSTGSGSKPNFCPNCGTKTGEANFCPNCGQKLV</sequence>
<dbReference type="EMBL" id="AB007638">
    <property type="protein sequence ID" value="BAA22764.1"/>
    <property type="molecule type" value="Genomic_DNA"/>
</dbReference>
<dbReference type="EMBL" id="AL009126">
    <property type="protein sequence ID" value="CAB12440.1"/>
    <property type="molecule type" value="Genomic_DNA"/>
</dbReference>
<dbReference type="PIR" id="E69789">
    <property type="entry name" value="E69789"/>
</dbReference>
<dbReference type="RefSeq" id="NP_388502.1">
    <property type="nucleotide sequence ID" value="NC_000964.3"/>
</dbReference>
<dbReference type="RefSeq" id="WP_003244029.1">
    <property type="nucleotide sequence ID" value="NZ_OZ025638.1"/>
</dbReference>
<dbReference type="SMR" id="O34789"/>
<dbReference type="FunCoup" id="O34789">
    <property type="interactions" value="15"/>
</dbReference>
<dbReference type="IntAct" id="O34789">
    <property type="interactions" value="1"/>
</dbReference>
<dbReference type="MINT" id="O34789"/>
<dbReference type="STRING" id="224308.BSU06210"/>
<dbReference type="PaxDb" id="224308-BSU06210"/>
<dbReference type="EnsemblBacteria" id="CAB12440">
    <property type="protein sequence ID" value="CAB12440"/>
    <property type="gene ID" value="BSU_06210"/>
</dbReference>
<dbReference type="GeneID" id="939493"/>
<dbReference type="KEGG" id="bsu:BSU06210"/>
<dbReference type="PATRIC" id="fig|224308.179.peg.672"/>
<dbReference type="eggNOG" id="COG4260">
    <property type="taxonomic scope" value="Bacteria"/>
</dbReference>
<dbReference type="InParanoid" id="O34789"/>
<dbReference type="OrthoDB" id="9764015at2"/>
<dbReference type="PhylomeDB" id="O34789"/>
<dbReference type="BioCyc" id="BSUB:BSU06210-MONOMER"/>
<dbReference type="Proteomes" id="UP000001570">
    <property type="component" value="Chromosome"/>
</dbReference>
<dbReference type="CDD" id="cd03408">
    <property type="entry name" value="SPFH_like_u1"/>
    <property type="match status" value="1"/>
</dbReference>
<dbReference type="InterPro" id="IPR036013">
    <property type="entry name" value="Band_7/SPFH_dom_sf"/>
</dbReference>
<dbReference type="InterPro" id="IPR033880">
    <property type="entry name" value="SPFH_YdjI"/>
</dbReference>
<dbReference type="PANTHER" id="PTHR37826">
    <property type="entry name" value="FLOTILLIN BAND_7_5 DOMAIN PROTEIN"/>
    <property type="match status" value="1"/>
</dbReference>
<dbReference type="PANTHER" id="PTHR37826:SF2">
    <property type="entry name" value="ZINC-RIBBON DOMAIN-CONTAINING PROTEIN"/>
    <property type="match status" value="1"/>
</dbReference>
<dbReference type="Pfam" id="PF13421">
    <property type="entry name" value="Band_7_1"/>
    <property type="match status" value="1"/>
</dbReference>
<dbReference type="SUPFAM" id="SSF117892">
    <property type="entry name" value="Band 7/SPFH domain"/>
    <property type="match status" value="1"/>
</dbReference>
<gene>
    <name type="primary">ydjI</name>
    <name type="ordered locus">BSU06210</name>
</gene>
<accession>O34789</accession>
<accession>Q797C5</accession>